<organism>
    <name type="scientific">Fowlpox virus (strain NVSL)</name>
    <name type="common">FPV</name>
    <dbReference type="NCBI Taxonomy" id="928301"/>
    <lineage>
        <taxon>Viruses</taxon>
        <taxon>Varidnaviria</taxon>
        <taxon>Bamfordvirae</taxon>
        <taxon>Nucleocytoviricota</taxon>
        <taxon>Pokkesviricetes</taxon>
        <taxon>Chitovirales</taxon>
        <taxon>Poxviridae</taxon>
        <taxon>Chordopoxvirinae</taxon>
        <taxon>Avipoxvirus</taxon>
        <taxon>Fowlpox virus</taxon>
    </lineage>
</organism>
<organismHost>
    <name type="scientific">Vertebrata</name>
    <dbReference type="NCBI Taxonomy" id="7742"/>
</organismHost>
<reference key="1">
    <citation type="submission" date="1998-01" db="EMBL/GenBank/DDBJ databases">
        <authorList>
            <person name="Pollitt E."/>
            <person name="Skinner M.A."/>
            <person name="Heaphy S."/>
        </authorList>
    </citation>
    <scope>NUCLEOTIDE SEQUENCE [GENOMIC DNA]</scope>
    <source>
        <strain>FP-9 / Isolate HP-440</strain>
    </source>
</reference>
<reference key="2">
    <citation type="journal article" date="2000" name="J. Virol.">
        <title>The genome of fowlpox virus.</title>
        <authorList>
            <person name="Afonso C.L."/>
            <person name="Tulman E.R."/>
            <person name="Lu Z."/>
            <person name="Zsak L."/>
            <person name="Kutish G.F."/>
            <person name="Rock D.L."/>
        </authorList>
    </citation>
    <scope>NUCLEOTIDE SEQUENCE [LARGE SCALE GENOMIC DNA]</scope>
</reference>
<feature type="chain" id="PRO_0000099585" description="Core protease I7 homolog">
    <location>
        <begin position="1"/>
        <end position="421"/>
    </location>
</feature>
<feature type="active site" evidence="1">
    <location>
        <position position="242"/>
    </location>
</feature>
<feature type="active site" evidence="1">
    <location>
        <position position="249"/>
    </location>
</feature>
<feature type="active site" evidence="1">
    <location>
        <position position="329"/>
    </location>
</feature>
<evidence type="ECO:0000250" key="1"/>
<evidence type="ECO:0000305" key="2"/>
<name>I7_FOWPN</name>
<dbReference type="EC" id="3.4.22.-"/>
<dbReference type="EMBL" id="AJ223385">
    <property type="protein sequence ID" value="CAA11298.1"/>
    <property type="molecule type" value="Genomic_DNA"/>
</dbReference>
<dbReference type="EMBL" id="AF198100">
    <property type="protein sequence ID" value="AAF44427.1"/>
    <property type="molecule type" value="Genomic_DNA"/>
</dbReference>
<dbReference type="PIR" id="F48563">
    <property type="entry name" value="F48563"/>
</dbReference>
<dbReference type="RefSeq" id="NP_039046.1">
    <property type="nucleotide sequence ID" value="NC_002188.1"/>
</dbReference>
<dbReference type="MEROPS" id="C57.001"/>
<dbReference type="GeneID" id="1486631"/>
<dbReference type="KEGG" id="vg:1486631"/>
<dbReference type="Proteomes" id="UP000008597">
    <property type="component" value="Segment"/>
</dbReference>
<dbReference type="GO" id="GO:0044423">
    <property type="term" value="C:virion component"/>
    <property type="evidence" value="ECO:0007669"/>
    <property type="project" value="UniProtKB-KW"/>
</dbReference>
<dbReference type="GO" id="GO:0008234">
    <property type="term" value="F:cysteine-type peptidase activity"/>
    <property type="evidence" value="ECO:0007669"/>
    <property type="project" value="UniProtKB-KW"/>
</dbReference>
<dbReference type="GO" id="GO:0006508">
    <property type="term" value="P:proteolysis"/>
    <property type="evidence" value="ECO:0007669"/>
    <property type="project" value="UniProtKB-KW"/>
</dbReference>
<dbReference type="InterPro" id="IPR038765">
    <property type="entry name" value="Papain-like_cys_pep_sf"/>
</dbReference>
<dbReference type="InterPro" id="IPR004970">
    <property type="entry name" value="Peptidase_C57"/>
</dbReference>
<dbReference type="Pfam" id="PF03290">
    <property type="entry name" value="Peptidase_C57"/>
    <property type="match status" value="1"/>
</dbReference>
<dbReference type="SUPFAM" id="SSF54001">
    <property type="entry name" value="Cysteine proteinases"/>
    <property type="match status" value="1"/>
</dbReference>
<protein>
    <recommendedName>
        <fullName>Core protease I7 homolog</fullName>
        <ecNumber>3.4.22.-</ecNumber>
    </recommendedName>
    <alternativeName>
        <fullName>Protein FPV083</fullName>
    </alternativeName>
</protein>
<comment type="function">
    <text evidence="1">Late protein responsible for processing most or all of the viral core and membrane proteins known to undergo morphogenesis-associated proteolysis. These proteolytic events are involved in the transformation of immature virions (IV) into mature virions (MV) (By similarity).</text>
</comment>
<comment type="subcellular location">
    <subcellularLocation>
        <location evidence="1">Virion</location>
    </subcellularLocation>
    <text evidence="1">Present in the virion core.</text>
</comment>
<comment type="induction">
    <text>Expressed in the late phase of the viral replicative cycle.</text>
</comment>
<comment type="similarity">
    <text evidence="2">Belongs to the peptidase C57 family.</text>
</comment>
<proteinExistence type="evidence at transcript level"/>
<gene>
    <name type="ordered locus">FPV083</name>
    <name type="ORF">FPI7L</name>
</gene>
<sequence length="421" mass="48621">MDKYTELVINKIPELGFVNLLSHIYQTVGLCSSIDISKFKTNCNGYVVERFDKSETAGKVSCVPISILMELVERGMLSKPDNSKSQLEVKTDLVNELISKNNGFEDIMTIPTSIPMKYFFKPVLKEKVSKAIDFSVMDIKGDDVSRMGIRYGENDKVVKIKIAPERDAWMTNTSIHQFLIPMCYGTEVIYIGQFNFNFMNRHAIYEKSSVFNKNTEVFKLKDRIRDNRSSRFIMFGFCYLHHWKCAIYDKNRDFICFYDSGGNNPNEFNHYRNFFFYSNSDGLNRNSYLSSLANENADIDILFNFFIDNYGVTAGCINVEVNQLLESECGMFTCLFMAVCCLNPPKGFKGIRKIYTYFKFLADKKVTMLKSILFNVGKMEFTIKEVDGEGMQQYKKMEKWCANTINILANKITSRVEDIIN</sequence>
<accession>O72903</accession>
<keyword id="KW-0378">Hydrolase</keyword>
<keyword id="KW-0426">Late protein</keyword>
<keyword id="KW-0645">Protease</keyword>
<keyword id="KW-1185">Reference proteome</keyword>
<keyword id="KW-0788">Thiol protease</keyword>
<keyword id="KW-0946">Virion</keyword>